<accession>B0UWH5</accession>
<comment type="function">
    <text evidence="1">Non-essential, abundant cell division factor that is required for proper Z-ring formation. It is recruited early to the divisome by direct interaction with FtsZ, stimulating Z-ring assembly and thereby promoting cell division earlier in the cell cycle. Its recruitment to the Z-ring requires functional FtsA or ZipA.</text>
</comment>
<comment type="subunit">
    <text evidence="1">Homodimer. The ends of the coiled-coil dimer bind to each other, forming polymers. Interacts with FtsZ.</text>
</comment>
<comment type="subcellular location">
    <subcellularLocation>
        <location evidence="1">Cytoplasm</location>
    </subcellularLocation>
    <text evidence="1">Localizes to the septum at mid-cell, in a FtsZ-like pattern.</text>
</comment>
<comment type="similarity">
    <text evidence="1">Belongs to the ZapB family.</text>
</comment>
<reference key="1">
    <citation type="submission" date="2008-02" db="EMBL/GenBank/DDBJ databases">
        <title>Complete sequence of Haemophilus somnus 2336.</title>
        <authorList>
            <consortium name="US DOE Joint Genome Institute"/>
            <person name="Siddaramappa S."/>
            <person name="Duncan A.J."/>
            <person name="Challacombe J.F."/>
            <person name="Rainey D."/>
            <person name="Gillaspy A.F."/>
            <person name="Carson M."/>
            <person name="Gipson J."/>
            <person name="Gipson M."/>
            <person name="Bruce D."/>
            <person name="Detter J.C."/>
            <person name="Han C.S."/>
            <person name="Land M."/>
            <person name="Tapia R."/>
            <person name="Thompson L.S."/>
            <person name="Orvis J."/>
            <person name="Zaitshik J."/>
            <person name="Barnes G."/>
            <person name="Brettin T.S."/>
            <person name="Dyer D.W."/>
            <person name="Inzana T.J."/>
        </authorList>
    </citation>
    <scope>NUCLEOTIDE SEQUENCE [LARGE SCALE GENOMIC DNA]</scope>
    <source>
        <strain>2336</strain>
    </source>
</reference>
<organism>
    <name type="scientific">Histophilus somni (strain 2336)</name>
    <name type="common">Haemophilus somnus</name>
    <dbReference type="NCBI Taxonomy" id="228400"/>
    <lineage>
        <taxon>Bacteria</taxon>
        <taxon>Pseudomonadati</taxon>
        <taxon>Pseudomonadota</taxon>
        <taxon>Gammaproteobacteria</taxon>
        <taxon>Pasteurellales</taxon>
        <taxon>Pasteurellaceae</taxon>
        <taxon>Histophilus</taxon>
    </lineage>
</organism>
<sequence>MSLEILDQLEEKIKQAVETIQLLQLEIEELKEKNELSRQTNEQLRSENEHLKTEHHNWQERLRSLLGRIDNI</sequence>
<gene>
    <name evidence="1" type="primary">zapB</name>
    <name type="ordered locus">HSM_1860</name>
</gene>
<protein>
    <recommendedName>
        <fullName evidence="1">Cell division protein ZapB</fullName>
    </recommendedName>
</protein>
<proteinExistence type="inferred from homology"/>
<keyword id="KW-0131">Cell cycle</keyword>
<keyword id="KW-0132">Cell division</keyword>
<keyword id="KW-0175">Coiled coil</keyword>
<keyword id="KW-0963">Cytoplasm</keyword>
<keyword id="KW-0717">Septation</keyword>
<feature type="chain" id="PRO_1000138440" description="Cell division protein ZapB">
    <location>
        <begin position="1"/>
        <end position="72"/>
    </location>
</feature>
<feature type="region of interest" description="Disordered" evidence="2">
    <location>
        <begin position="36"/>
        <end position="56"/>
    </location>
</feature>
<feature type="coiled-coil region" evidence="1">
    <location>
        <begin position="1"/>
        <end position="71"/>
    </location>
</feature>
<feature type="compositionally biased region" description="Basic and acidic residues" evidence="2">
    <location>
        <begin position="44"/>
        <end position="56"/>
    </location>
</feature>
<dbReference type="EMBL" id="CP000947">
    <property type="protein sequence ID" value="ACA31650.1"/>
    <property type="molecule type" value="Genomic_DNA"/>
</dbReference>
<dbReference type="RefSeq" id="WP_011609851.1">
    <property type="nucleotide sequence ID" value="NC_010519.1"/>
</dbReference>
<dbReference type="SMR" id="B0UWH5"/>
<dbReference type="STRING" id="228400.HSM_1860"/>
<dbReference type="GeneID" id="31488168"/>
<dbReference type="KEGG" id="hsm:HSM_1860"/>
<dbReference type="HOGENOM" id="CLU_171174_2_0_6"/>
<dbReference type="GO" id="GO:0005737">
    <property type="term" value="C:cytoplasm"/>
    <property type="evidence" value="ECO:0007669"/>
    <property type="project" value="UniProtKB-SubCell"/>
</dbReference>
<dbReference type="GO" id="GO:0000917">
    <property type="term" value="P:division septum assembly"/>
    <property type="evidence" value="ECO:0007669"/>
    <property type="project" value="UniProtKB-KW"/>
</dbReference>
<dbReference type="GO" id="GO:0043093">
    <property type="term" value="P:FtsZ-dependent cytokinesis"/>
    <property type="evidence" value="ECO:0007669"/>
    <property type="project" value="UniProtKB-UniRule"/>
</dbReference>
<dbReference type="Gene3D" id="1.20.5.340">
    <property type="match status" value="1"/>
</dbReference>
<dbReference type="HAMAP" id="MF_01196">
    <property type="entry name" value="ZapB"/>
    <property type="match status" value="1"/>
</dbReference>
<dbReference type="InterPro" id="IPR009252">
    <property type="entry name" value="Cell_div_ZapB"/>
</dbReference>
<dbReference type="Pfam" id="PF06005">
    <property type="entry name" value="ZapB"/>
    <property type="match status" value="1"/>
</dbReference>
<name>ZAPB_HISS2</name>
<evidence type="ECO:0000255" key="1">
    <source>
        <dbReference type="HAMAP-Rule" id="MF_01196"/>
    </source>
</evidence>
<evidence type="ECO:0000256" key="2">
    <source>
        <dbReference type="SAM" id="MobiDB-lite"/>
    </source>
</evidence>